<accession>Q4A8Q0</accession>
<keyword id="KW-0963">Cytoplasm</keyword>
<keyword id="KW-0328">Glycosyltransferase</keyword>
<keyword id="KW-0660">Purine salvage</keyword>
<keyword id="KW-0808">Transferase</keyword>
<proteinExistence type="inferred from homology"/>
<evidence type="ECO:0000255" key="1">
    <source>
        <dbReference type="HAMAP-Rule" id="MF_00004"/>
    </source>
</evidence>
<gene>
    <name evidence="1" type="primary">apt</name>
    <name type="ordered locus">MHP7448_0114</name>
</gene>
<reference key="1">
    <citation type="journal article" date="2005" name="J. Bacteriol.">
        <title>Swine and poultry pathogens: the complete genome sequences of two strains of Mycoplasma hyopneumoniae and a strain of Mycoplasma synoviae.</title>
        <authorList>
            <person name="Vasconcelos A.T.R."/>
            <person name="Ferreira H.B."/>
            <person name="Bizarro C.V."/>
            <person name="Bonatto S.L."/>
            <person name="Carvalho M.O."/>
            <person name="Pinto P.M."/>
            <person name="Almeida D.F."/>
            <person name="Almeida L.G.P."/>
            <person name="Almeida R."/>
            <person name="Alves-Junior L."/>
            <person name="Assuncao E.N."/>
            <person name="Azevedo V.A.C."/>
            <person name="Bogo M.R."/>
            <person name="Brigido M.M."/>
            <person name="Brocchi M."/>
            <person name="Burity H.A."/>
            <person name="Camargo A.A."/>
            <person name="Camargo S.S."/>
            <person name="Carepo M.S."/>
            <person name="Carraro D.M."/>
            <person name="de Mattos Cascardo J.C."/>
            <person name="Castro L.A."/>
            <person name="Cavalcanti G."/>
            <person name="Chemale G."/>
            <person name="Collevatti R.G."/>
            <person name="Cunha C.W."/>
            <person name="Dallagiovanna B."/>
            <person name="Dambros B.P."/>
            <person name="Dellagostin O.A."/>
            <person name="Falcao C."/>
            <person name="Fantinatti-Garboggini F."/>
            <person name="Felipe M.S.S."/>
            <person name="Fiorentin L."/>
            <person name="Franco G.R."/>
            <person name="Freitas N.S.A."/>
            <person name="Frias D."/>
            <person name="Grangeiro T.B."/>
            <person name="Grisard E.C."/>
            <person name="Guimaraes C.T."/>
            <person name="Hungria M."/>
            <person name="Jardim S.N."/>
            <person name="Krieger M.A."/>
            <person name="Laurino J.P."/>
            <person name="Lima L.F.A."/>
            <person name="Lopes M.I."/>
            <person name="Loreto E.L.S."/>
            <person name="Madeira H.M.F."/>
            <person name="Manfio G.P."/>
            <person name="Maranhao A.Q."/>
            <person name="Martinkovics C.T."/>
            <person name="Medeiros S.R.B."/>
            <person name="Moreira M.A.M."/>
            <person name="Neiva M."/>
            <person name="Ramalho-Neto C.E."/>
            <person name="Nicolas M.F."/>
            <person name="Oliveira S.C."/>
            <person name="Paixao R.F.C."/>
            <person name="Pedrosa F.O."/>
            <person name="Pena S.D.J."/>
            <person name="Pereira M."/>
            <person name="Pereira-Ferrari L."/>
            <person name="Piffer I."/>
            <person name="Pinto L.S."/>
            <person name="Potrich D.P."/>
            <person name="Salim A.C.M."/>
            <person name="Santos F.R."/>
            <person name="Schmitt R."/>
            <person name="Schneider M.P.C."/>
            <person name="Schrank A."/>
            <person name="Schrank I.S."/>
            <person name="Schuck A.F."/>
            <person name="Seuanez H.N."/>
            <person name="Silva D.W."/>
            <person name="Silva R."/>
            <person name="Silva S.C."/>
            <person name="Soares C.M.A."/>
            <person name="Souza K.R.L."/>
            <person name="Souza R.C."/>
            <person name="Staats C.C."/>
            <person name="Steffens M.B.R."/>
            <person name="Teixeira S.M.R."/>
            <person name="Urmenyi T.P."/>
            <person name="Vainstein M.H."/>
            <person name="Zuccherato L.W."/>
            <person name="Simpson A.J.G."/>
            <person name="Zaha A."/>
        </authorList>
    </citation>
    <scope>NUCLEOTIDE SEQUENCE [LARGE SCALE GENOMIC DNA]</scope>
    <source>
        <strain>7448</strain>
    </source>
</reference>
<feature type="chain" id="PRO_1000000309" description="Adenine phosphoribosyltransferase">
    <location>
        <begin position="1"/>
        <end position="171"/>
    </location>
</feature>
<protein>
    <recommendedName>
        <fullName evidence="1">Adenine phosphoribosyltransferase</fullName>
        <shortName evidence="1">APRT</shortName>
        <ecNumber evidence="1">2.4.2.7</ecNumber>
    </recommendedName>
</protein>
<sequence length="171" mass="18849">MQINLEKYIRTVEDFPKKGISFKDISPLLADGKALNYTIVEMASLAKDVDIIVGPDARGFLFGTPTAAFLSKPFIMIRKAGKLPGEVEEFAYELEYGSAILEVQVDMIKPGQKVAIIDDVLATGGTVKAITKMIERAGAIVDKIIFLIELEQLQGRKKLENYDVISLIKIS</sequence>
<dbReference type="EC" id="2.4.2.7" evidence="1"/>
<dbReference type="EMBL" id="AE017244">
    <property type="protein sequence ID" value="AAZ53489.2"/>
    <property type="molecule type" value="Genomic_DNA"/>
</dbReference>
<dbReference type="RefSeq" id="WP_011206103.1">
    <property type="nucleotide sequence ID" value="NC_007332.1"/>
</dbReference>
<dbReference type="SMR" id="Q4A8Q0"/>
<dbReference type="KEGG" id="mhp:MHP7448_0114"/>
<dbReference type="HOGENOM" id="CLU_063339_3_0_14"/>
<dbReference type="UniPathway" id="UPA00588">
    <property type="reaction ID" value="UER00646"/>
</dbReference>
<dbReference type="Proteomes" id="UP000000553">
    <property type="component" value="Chromosome"/>
</dbReference>
<dbReference type="GO" id="GO:0005737">
    <property type="term" value="C:cytoplasm"/>
    <property type="evidence" value="ECO:0007669"/>
    <property type="project" value="UniProtKB-SubCell"/>
</dbReference>
<dbReference type="GO" id="GO:0002055">
    <property type="term" value="F:adenine binding"/>
    <property type="evidence" value="ECO:0007669"/>
    <property type="project" value="TreeGrafter"/>
</dbReference>
<dbReference type="GO" id="GO:0003999">
    <property type="term" value="F:adenine phosphoribosyltransferase activity"/>
    <property type="evidence" value="ECO:0007669"/>
    <property type="project" value="UniProtKB-UniRule"/>
</dbReference>
<dbReference type="GO" id="GO:0016208">
    <property type="term" value="F:AMP binding"/>
    <property type="evidence" value="ECO:0007669"/>
    <property type="project" value="TreeGrafter"/>
</dbReference>
<dbReference type="GO" id="GO:0006168">
    <property type="term" value="P:adenine salvage"/>
    <property type="evidence" value="ECO:0007669"/>
    <property type="project" value="InterPro"/>
</dbReference>
<dbReference type="GO" id="GO:0044209">
    <property type="term" value="P:AMP salvage"/>
    <property type="evidence" value="ECO:0007669"/>
    <property type="project" value="UniProtKB-UniRule"/>
</dbReference>
<dbReference type="GO" id="GO:0006166">
    <property type="term" value="P:purine ribonucleoside salvage"/>
    <property type="evidence" value="ECO:0007669"/>
    <property type="project" value="UniProtKB-KW"/>
</dbReference>
<dbReference type="CDD" id="cd06223">
    <property type="entry name" value="PRTases_typeI"/>
    <property type="match status" value="1"/>
</dbReference>
<dbReference type="FunFam" id="3.40.50.2020:FF:000004">
    <property type="entry name" value="Adenine phosphoribosyltransferase"/>
    <property type="match status" value="1"/>
</dbReference>
<dbReference type="Gene3D" id="3.40.50.2020">
    <property type="match status" value="1"/>
</dbReference>
<dbReference type="HAMAP" id="MF_00004">
    <property type="entry name" value="Aden_phosphoribosyltr"/>
    <property type="match status" value="1"/>
</dbReference>
<dbReference type="InterPro" id="IPR005764">
    <property type="entry name" value="Ade_phspho_trans"/>
</dbReference>
<dbReference type="InterPro" id="IPR000836">
    <property type="entry name" value="PRibTrfase_dom"/>
</dbReference>
<dbReference type="InterPro" id="IPR029057">
    <property type="entry name" value="PRTase-like"/>
</dbReference>
<dbReference type="InterPro" id="IPR050054">
    <property type="entry name" value="UPRTase/APRTase"/>
</dbReference>
<dbReference type="NCBIfam" id="TIGR01090">
    <property type="entry name" value="apt"/>
    <property type="match status" value="1"/>
</dbReference>
<dbReference type="NCBIfam" id="NF002634">
    <property type="entry name" value="PRK02304.1-3"/>
    <property type="match status" value="1"/>
</dbReference>
<dbReference type="NCBIfam" id="NF002636">
    <property type="entry name" value="PRK02304.1-5"/>
    <property type="match status" value="1"/>
</dbReference>
<dbReference type="PANTHER" id="PTHR32315">
    <property type="entry name" value="ADENINE PHOSPHORIBOSYLTRANSFERASE"/>
    <property type="match status" value="1"/>
</dbReference>
<dbReference type="PANTHER" id="PTHR32315:SF3">
    <property type="entry name" value="ADENINE PHOSPHORIBOSYLTRANSFERASE"/>
    <property type="match status" value="1"/>
</dbReference>
<dbReference type="Pfam" id="PF00156">
    <property type="entry name" value="Pribosyltran"/>
    <property type="match status" value="1"/>
</dbReference>
<dbReference type="SUPFAM" id="SSF53271">
    <property type="entry name" value="PRTase-like"/>
    <property type="match status" value="1"/>
</dbReference>
<organism>
    <name type="scientific">Mesomycoplasma hyopneumoniae (strain 7448)</name>
    <name type="common">Mycoplasma hyopneumoniae</name>
    <dbReference type="NCBI Taxonomy" id="262722"/>
    <lineage>
        <taxon>Bacteria</taxon>
        <taxon>Bacillati</taxon>
        <taxon>Mycoplasmatota</taxon>
        <taxon>Mycoplasmoidales</taxon>
        <taxon>Metamycoplasmataceae</taxon>
        <taxon>Mesomycoplasma</taxon>
    </lineage>
</organism>
<name>APT_MESH7</name>
<comment type="function">
    <text evidence="1">Catalyzes a salvage reaction resulting in the formation of AMP, that is energically less costly than de novo synthesis.</text>
</comment>
<comment type="catalytic activity">
    <reaction evidence="1">
        <text>AMP + diphosphate = 5-phospho-alpha-D-ribose 1-diphosphate + adenine</text>
        <dbReference type="Rhea" id="RHEA:16609"/>
        <dbReference type="ChEBI" id="CHEBI:16708"/>
        <dbReference type="ChEBI" id="CHEBI:33019"/>
        <dbReference type="ChEBI" id="CHEBI:58017"/>
        <dbReference type="ChEBI" id="CHEBI:456215"/>
        <dbReference type="EC" id="2.4.2.7"/>
    </reaction>
</comment>
<comment type="pathway">
    <text evidence="1">Purine metabolism; AMP biosynthesis via salvage pathway; AMP from adenine: step 1/1.</text>
</comment>
<comment type="subunit">
    <text evidence="1">Homodimer.</text>
</comment>
<comment type="subcellular location">
    <subcellularLocation>
        <location evidence="1">Cytoplasm</location>
    </subcellularLocation>
</comment>
<comment type="similarity">
    <text evidence="1">Belongs to the purine/pyrimidine phosphoribosyltransferase family.</text>
</comment>